<protein>
    <recommendedName>
        <fullName evidence="1">3,4-dihydroxy-2-butanone 4-phosphate synthase</fullName>
        <shortName evidence="1">DHBP synthase</shortName>
        <ecNumber evidence="1">4.1.99.12</ecNumber>
    </recommendedName>
</protein>
<proteinExistence type="inferred from homology"/>
<name>RIBB_ECODH</name>
<dbReference type="EC" id="4.1.99.12" evidence="1"/>
<dbReference type="EMBL" id="CP000948">
    <property type="protein sequence ID" value="ACB04126.1"/>
    <property type="molecule type" value="Genomic_DNA"/>
</dbReference>
<dbReference type="RefSeq" id="WP_001076997.1">
    <property type="nucleotide sequence ID" value="NC_010473.1"/>
</dbReference>
<dbReference type="SMR" id="B1XG46"/>
<dbReference type="GeneID" id="93778953"/>
<dbReference type="KEGG" id="ecd:ECDH10B_3215"/>
<dbReference type="HOGENOM" id="CLU_020273_3_0_6"/>
<dbReference type="UniPathway" id="UPA00275">
    <property type="reaction ID" value="UER00399"/>
</dbReference>
<dbReference type="GO" id="GO:0005829">
    <property type="term" value="C:cytosol"/>
    <property type="evidence" value="ECO:0007669"/>
    <property type="project" value="TreeGrafter"/>
</dbReference>
<dbReference type="GO" id="GO:0008686">
    <property type="term" value="F:3,4-dihydroxy-2-butanone-4-phosphate synthase activity"/>
    <property type="evidence" value="ECO:0007669"/>
    <property type="project" value="UniProtKB-UniRule"/>
</dbReference>
<dbReference type="GO" id="GO:0000287">
    <property type="term" value="F:magnesium ion binding"/>
    <property type="evidence" value="ECO:0007669"/>
    <property type="project" value="UniProtKB-UniRule"/>
</dbReference>
<dbReference type="GO" id="GO:0030145">
    <property type="term" value="F:manganese ion binding"/>
    <property type="evidence" value="ECO:0007669"/>
    <property type="project" value="UniProtKB-UniRule"/>
</dbReference>
<dbReference type="GO" id="GO:0009231">
    <property type="term" value="P:riboflavin biosynthetic process"/>
    <property type="evidence" value="ECO:0007669"/>
    <property type="project" value="UniProtKB-UniRule"/>
</dbReference>
<dbReference type="FunFam" id="3.90.870.10:FF:000002">
    <property type="entry name" value="3,4-dihydroxy-2-butanone 4-phosphate synthase"/>
    <property type="match status" value="1"/>
</dbReference>
<dbReference type="Gene3D" id="3.90.870.10">
    <property type="entry name" value="DHBP synthase"/>
    <property type="match status" value="1"/>
</dbReference>
<dbReference type="HAMAP" id="MF_00180">
    <property type="entry name" value="RibB"/>
    <property type="match status" value="1"/>
</dbReference>
<dbReference type="InterPro" id="IPR017945">
    <property type="entry name" value="DHBP_synth_RibB-like_a/b_dom"/>
</dbReference>
<dbReference type="InterPro" id="IPR000422">
    <property type="entry name" value="DHBP_synthase_RibB"/>
</dbReference>
<dbReference type="NCBIfam" id="TIGR00506">
    <property type="entry name" value="ribB"/>
    <property type="match status" value="1"/>
</dbReference>
<dbReference type="PANTHER" id="PTHR21327:SF38">
    <property type="entry name" value="3,4-DIHYDROXY-2-BUTANONE 4-PHOSPHATE SYNTHASE"/>
    <property type="match status" value="1"/>
</dbReference>
<dbReference type="PANTHER" id="PTHR21327">
    <property type="entry name" value="GTP CYCLOHYDROLASE II-RELATED"/>
    <property type="match status" value="1"/>
</dbReference>
<dbReference type="Pfam" id="PF00926">
    <property type="entry name" value="DHBP_synthase"/>
    <property type="match status" value="1"/>
</dbReference>
<dbReference type="SUPFAM" id="SSF55821">
    <property type="entry name" value="YrdC/RibB"/>
    <property type="match status" value="1"/>
</dbReference>
<feature type="chain" id="PRO_1000098278" description="3,4-dihydroxy-2-butanone 4-phosphate synthase">
    <location>
        <begin position="1"/>
        <end position="217"/>
    </location>
</feature>
<feature type="binding site" evidence="1">
    <location>
        <begin position="37"/>
        <end position="38"/>
    </location>
    <ligand>
        <name>D-ribulose 5-phosphate</name>
        <dbReference type="ChEBI" id="CHEBI:58121"/>
    </ligand>
</feature>
<feature type="binding site" evidence="1">
    <location>
        <position position="38"/>
    </location>
    <ligand>
        <name>Mg(2+)</name>
        <dbReference type="ChEBI" id="CHEBI:18420"/>
        <label>1</label>
    </ligand>
</feature>
<feature type="binding site" evidence="1">
    <location>
        <position position="38"/>
    </location>
    <ligand>
        <name>Mg(2+)</name>
        <dbReference type="ChEBI" id="CHEBI:18420"/>
        <label>2</label>
    </ligand>
</feature>
<feature type="binding site" evidence="1">
    <location>
        <position position="42"/>
    </location>
    <ligand>
        <name>D-ribulose 5-phosphate</name>
        <dbReference type="ChEBI" id="CHEBI:58121"/>
    </ligand>
</feature>
<feature type="binding site" evidence="1">
    <location>
        <begin position="150"/>
        <end position="154"/>
    </location>
    <ligand>
        <name>D-ribulose 5-phosphate</name>
        <dbReference type="ChEBI" id="CHEBI:58121"/>
    </ligand>
</feature>
<feature type="binding site" evidence="1">
    <location>
        <position position="153"/>
    </location>
    <ligand>
        <name>Mg(2+)</name>
        <dbReference type="ChEBI" id="CHEBI:18420"/>
        <label>2</label>
    </ligand>
</feature>
<feature type="binding site" evidence="1">
    <location>
        <position position="174"/>
    </location>
    <ligand>
        <name>D-ribulose 5-phosphate</name>
        <dbReference type="ChEBI" id="CHEBI:58121"/>
    </ligand>
</feature>
<feature type="site" description="Essential for catalytic activity" evidence="1">
    <location>
        <position position="136"/>
    </location>
</feature>
<feature type="site" description="Essential for catalytic activity" evidence="1">
    <location>
        <position position="174"/>
    </location>
</feature>
<comment type="function">
    <text evidence="1">Catalyzes the conversion of D-ribulose 5-phosphate to formate and 3,4-dihydroxy-2-butanone 4-phosphate.</text>
</comment>
<comment type="catalytic activity">
    <reaction evidence="1">
        <text>D-ribulose 5-phosphate = (2S)-2-hydroxy-3-oxobutyl phosphate + formate + H(+)</text>
        <dbReference type="Rhea" id="RHEA:18457"/>
        <dbReference type="ChEBI" id="CHEBI:15378"/>
        <dbReference type="ChEBI" id="CHEBI:15740"/>
        <dbReference type="ChEBI" id="CHEBI:58121"/>
        <dbReference type="ChEBI" id="CHEBI:58830"/>
        <dbReference type="EC" id="4.1.99.12"/>
    </reaction>
</comment>
<comment type="cofactor">
    <cofactor evidence="1">
        <name>Mg(2+)</name>
        <dbReference type="ChEBI" id="CHEBI:18420"/>
    </cofactor>
    <cofactor evidence="1">
        <name>Mn(2+)</name>
        <dbReference type="ChEBI" id="CHEBI:29035"/>
    </cofactor>
    <text evidence="1">Binds 2 divalent metal cations per subunit. Magnesium or manganese.</text>
</comment>
<comment type="pathway">
    <text evidence="1">Cofactor biosynthesis; riboflavin biosynthesis; 2-hydroxy-3-oxobutyl phosphate from D-ribulose 5-phosphate: step 1/1.</text>
</comment>
<comment type="subunit">
    <text evidence="1">Homodimer.</text>
</comment>
<comment type="similarity">
    <text evidence="1">Belongs to the DHBP synthase family.</text>
</comment>
<sequence>MNQTLLSSFGTPFERVENALAALREGRGVMVLDDEDRENEGDMIFPAETMTVEQMALTIRHGSGIVCLCITEDRRKQLDLPMMVENNTSAYGTGFTVTIEAAEGVTTGVSAADRITTVRAAIADGAKPSDLNRPGHVFPLRAQAGGVLTRGGHTEATIDLMTLAGFKPAGVLCELTNDDGTMARAPECIEFANKHNMALVTIEDLVAYRQAHERKAS</sequence>
<keyword id="KW-0456">Lyase</keyword>
<keyword id="KW-0460">Magnesium</keyword>
<keyword id="KW-0464">Manganese</keyword>
<keyword id="KW-0479">Metal-binding</keyword>
<keyword id="KW-0686">Riboflavin biosynthesis</keyword>
<accession>B1XG46</accession>
<organism>
    <name type="scientific">Escherichia coli (strain K12 / DH10B)</name>
    <dbReference type="NCBI Taxonomy" id="316385"/>
    <lineage>
        <taxon>Bacteria</taxon>
        <taxon>Pseudomonadati</taxon>
        <taxon>Pseudomonadota</taxon>
        <taxon>Gammaproteobacteria</taxon>
        <taxon>Enterobacterales</taxon>
        <taxon>Enterobacteriaceae</taxon>
        <taxon>Escherichia</taxon>
    </lineage>
</organism>
<reference key="1">
    <citation type="journal article" date="2008" name="J. Bacteriol.">
        <title>The complete genome sequence of Escherichia coli DH10B: insights into the biology of a laboratory workhorse.</title>
        <authorList>
            <person name="Durfee T."/>
            <person name="Nelson R."/>
            <person name="Baldwin S."/>
            <person name="Plunkett G. III"/>
            <person name="Burland V."/>
            <person name="Mau B."/>
            <person name="Petrosino J.F."/>
            <person name="Qin X."/>
            <person name="Muzny D.M."/>
            <person name="Ayele M."/>
            <person name="Gibbs R.A."/>
            <person name="Csorgo B."/>
            <person name="Posfai G."/>
            <person name="Weinstock G.M."/>
            <person name="Blattner F.R."/>
        </authorList>
    </citation>
    <scope>NUCLEOTIDE SEQUENCE [LARGE SCALE GENOMIC DNA]</scope>
    <source>
        <strain>K12 / DH10B</strain>
    </source>
</reference>
<evidence type="ECO:0000255" key="1">
    <source>
        <dbReference type="HAMAP-Rule" id="MF_00180"/>
    </source>
</evidence>
<gene>
    <name evidence="1" type="primary">ribB</name>
    <name type="ordered locus">ECDH10B_3215</name>
</gene>